<dbReference type="EC" id="5.6.2.2" evidence="1"/>
<dbReference type="EMBL" id="AE009949">
    <property type="protein sequence ID" value="AAL97734.1"/>
    <property type="molecule type" value="Genomic_DNA"/>
</dbReference>
<dbReference type="RefSeq" id="WP_011017764.1">
    <property type="nucleotide sequence ID" value="NC_003485.1"/>
</dbReference>
<dbReference type="SMR" id="Q8P116"/>
<dbReference type="KEGG" id="spm:spyM18_1112"/>
<dbReference type="HOGENOM" id="CLU_002977_6_1_9"/>
<dbReference type="GO" id="GO:0005694">
    <property type="term" value="C:chromosome"/>
    <property type="evidence" value="ECO:0007669"/>
    <property type="project" value="InterPro"/>
</dbReference>
<dbReference type="GO" id="GO:0005737">
    <property type="term" value="C:cytoplasm"/>
    <property type="evidence" value="ECO:0007669"/>
    <property type="project" value="UniProtKB-SubCell"/>
</dbReference>
<dbReference type="GO" id="GO:0009330">
    <property type="term" value="C:DNA topoisomerase type II (double strand cut, ATP-hydrolyzing) complex"/>
    <property type="evidence" value="ECO:0007669"/>
    <property type="project" value="TreeGrafter"/>
</dbReference>
<dbReference type="GO" id="GO:0005524">
    <property type="term" value="F:ATP binding"/>
    <property type="evidence" value="ECO:0007669"/>
    <property type="project" value="UniProtKB-UniRule"/>
</dbReference>
<dbReference type="GO" id="GO:0003677">
    <property type="term" value="F:DNA binding"/>
    <property type="evidence" value="ECO:0007669"/>
    <property type="project" value="UniProtKB-UniRule"/>
</dbReference>
<dbReference type="GO" id="GO:0034335">
    <property type="term" value="F:DNA negative supercoiling activity"/>
    <property type="evidence" value="ECO:0007669"/>
    <property type="project" value="UniProtKB-ARBA"/>
</dbReference>
<dbReference type="GO" id="GO:0006265">
    <property type="term" value="P:DNA topological change"/>
    <property type="evidence" value="ECO:0007669"/>
    <property type="project" value="UniProtKB-UniRule"/>
</dbReference>
<dbReference type="GO" id="GO:0006261">
    <property type="term" value="P:DNA-templated DNA replication"/>
    <property type="evidence" value="ECO:0007669"/>
    <property type="project" value="UniProtKB-UniRule"/>
</dbReference>
<dbReference type="CDD" id="cd00187">
    <property type="entry name" value="TOP4c"/>
    <property type="match status" value="1"/>
</dbReference>
<dbReference type="FunFam" id="1.10.268.10:FF:000001">
    <property type="entry name" value="DNA gyrase subunit A"/>
    <property type="match status" value="1"/>
</dbReference>
<dbReference type="FunFam" id="2.120.10.90:FF:000004">
    <property type="entry name" value="DNA gyrase subunit A"/>
    <property type="match status" value="1"/>
</dbReference>
<dbReference type="FunFam" id="3.30.1360.40:FF:000002">
    <property type="entry name" value="DNA gyrase subunit A"/>
    <property type="match status" value="1"/>
</dbReference>
<dbReference type="FunFam" id="3.90.199.10:FF:000001">
    <property type="entry name" value="DNA gyrase subunit A"/>
    <property type="match status" value="1"/>
</dbReference>
<dbReference type="Gene3D" id="3.30.1360.40">
    <property type="match status" value="1"/>
</dbReference>
<dbReference type="Gene3D" id="2.120.10.90">
    <property type="entry name" value="DNA gyrase/topoisomerase IV, subunit A, C-terminal"/>
    <property type="match status" value="1"/>
</dbReference>
<dbReference type="Gene3D" id="3.90.199.10">
    <property type="entry name" value="Topoisomerase II, domain 5"/>
    <property type="match status" value="1"/>
</dbReference>
<dbReference type="Gene3D" id="1.10.268.10">
    <property type="entry name" value="Topoisomerase, domain 3"/>
    <property type="match status" value="1"/>
</dbReference>
<dbReference type="HAMAP" id="MF_01897">
    <property type="entry name" value="GyrA"/>
    <property type="match status" value="1"/>
</dbReference>
<dbReference type="InterPro" id="IPR005743">
    <property type="entry name" value="GyrA"/>
</dbReference>
<dbReference type="InterPro" id="IPR006691">
    <property type="entry name" value="GyrA/parC_rep"/>
</dbReference>
<dbReference type="InterPro" id="IPR035516">
    <property type="entry name" value="Gyrase/topoIV_suA_C"/>
</dbReference>
<dbReference type="InterPro" id="IPR013760">
    <property type="entry name" value="Topo_IIA-like_dom_sf"/>
</dbReference>
<dbReference type="InterPro" id="IPR013758">
    <property type="entry name" value="Topo_IIA_A/C_ab"/>
</dbReference>
<dbReference type="InterPro" id="IPR013757">
    <property type="entry name" value="Topo_IIA_A_a_sf"/>
</dbReference>
<dbReference type="InterPro" id="IPR002205">
    <property type="entry name" value="Topo_IIA_dom_A"/>
</dbReference>
<dbReference type="InterPro" id="IPR050220">
    <property type="entry name" value="Type_II_DNA_Topoisomerases"/>
</dbReference>
<dbReference type="NCBIfam" id="TIGR01063">
    <property type="entry name" value="gyrA"/>
    <property type="match status" value="1"/>
</dbReference>
<dbReference type="NCBIfam" id="NF004043">
    <property type="entry name" value="PRK05560.1"/>
    <property type="match status" value="1"/>
</dbReference>
<dbReference type="NCBIfam" id="NF004044">
    <property type="entry name" value="PRK05561.1"/>
    <property type="match status" value="1"/>
</dbReference>
<dbReference type="PANTHER" id="PTHR43493:SF5">
    <property type="entry name" value="DNA GYRASE SUBUNIT A, CHLOROPLASTIC_MITOCHONDRIAL"/>
    <property type="match status" value="1"/>
</dbReference>
<dbReference type="PANTHER" id="PTHR43493">
    <property type="entry name" value="DNA GYRASE/TOPOISOMERASE SUBUNIT A"/>
    <property type="match status" value="1"/>
</dbReference>
<dbReference type="Pfam" id="PF03989">
    <property type="entry name" value="DNA_gyraseA_C"/>
    <property type="match status" value="6"/>
</dbReference>
<dbReference type="Pfam" id="PF00521">
    <property type="entry name" value="DNA_topoisoIV"/>
    <property type="match status" value="1"/>
</dbReference>
<dbReference type="SMART" id="SM00434">
    <property type="entry name" value="TOP4c"/>
    <property type="match status" value="1"/>
</dbReference>
<dbReference type="SUPFAM" id="SSF101904">
    <property type="entry name" value="GyrA/ParC C-terminal domain-like"/>
    <property type="match status" value="1"/>
</dbReference>
<dbReference type="SUPFAM" id="SSF56719">
    <property type="entry name" value="Type II DNA topoisomerase"/>
    <property type="match status" value="1"/>
</dbReference>
<dbReference type="PROSITE" id="PS52040">
    <property type="entry name" value="TOPO_IIA"/>
    <property type="match status" value="1"/>
</dbReference>
<keyword id="KW-0067">ATP-binding</keyword>
<keyword id="KW-0963">Cytoplasm</keyword>
<keyword id="KW-0238">DNA-binding</keyword>
<keyword id="KW-0413">Isomerase</keyword>
<keyword id="KW-0547">Nucleotide-binding</keyword>
<keyword id="KW-0799">Topoisomerase</keyword>
<protein>
    <recommendedName>
        <fullName evidence="1">DNA gyrase subunit A</fullName>
        <ecNumber evidence="1">5.6.2.2</ecNumber>
    </recommendedName>
</protein>
<comment type="function">
    <text evidence="1">A type II topoisomerase that negatively supercoils closed circular double-stranded (ds) DNA in an ATP-dependent manner to modulate DNA topology and maintain chromosomes in an underwound state. Negative supercoiling favors strand separation, and DNA replication, transcription, recombination and repair, all of which involve strand separation. Also able to catalyze the interconversion of other topological isomers of dsDNA rings, including catenanes and knotted rings. Type II topoisomerases break and join 2 DNA strands simultaneously in an ATP-dependent manner.</text>
</comment>
<comment type="catalytic activity">
    <reaction evidence="1">
        <text>ATP-dependent breakage, passage and rejoining of double-stranded DNA.</text>
        <dbReference type="EC" id="5.6.2.2"/>
    </reaction>
</comment>
<comment type="subunit">
    <text evidence="1">Heterotetramer, composed of two GyrA and two GyrB chains. In the heterotetramer, GyrA contains the active site tyrosine that forms a transient covalent intermediate with DNA, while GyrB binds cofactors and catalyzes ATP hydrolysis.</text>
</comment>
<comment type="subcellular location">
    <subcellularLocation>
        <location evidence="1">Cytoplasm</location>
    </subcellularLocation>
</comment>
<comment type="miscellaneous">
    <text evidence="1">Few gyrases are as efficient as E.coli at forming negative supercoils. Not all organisms have 2 type II topoisomerases; in organisms with a single type II topoisomerase this enzyme also has to decatenate newly replicated chromosomes.</text>
</comment>
<comment type="similarity">
    <text evidence="1">Belongs to the type II topoisomerase GyrA/ParC subunit family.</text>
</comment>
<evidence type="ECO:0000255" key="1">
    <source>
        <dbReference type="HAMAP-Rule" id="MF_01897"/>
    </source>
</evidence>
<evidence type="ECO:0000255" key="2">
    <source>
        <dbReference type="PROSITE-ProRule" id="PRU01384"/>
    </source>
</evidence>
<accession>Q8P116</accession>
<organism>
    <name type="scientific">Streptococcus pyogenes serotype M18 (strain MGAS8232)</name>
    <dbReference type="NCBI Taxonomy" id="186103"/>
    <lineage>
        <taxon>Bacteria</taxon>
        <taxon>Bacillati</taxon>
        <taxon>Bacillota</taxon>
        <taxon>Bacilli</taxon>
        <taxon>Lactobacillales</taxon>
        <taxon>Streptococcaceae</taxon>
        <taxon>Streptococcus</taxon>
    </lineage>
</organism>
<name>GYRA_STRP8</name>
<proteinExistence type="inferred from homology"/>
<gene>
    <name evidence="1" type="primary">gyrA</name>
    <name type="ordered locus">spyM18_1112</name>
</gene>
<sequence length="828" mass="92744">MQDRNLIDVNLTSEMKTSFIDYAMSVIVARALPDVRDGLKPVHRRILYGMNELGVTPDKPHKKSARITGDVMGKYHPHGDSSIYEAMVRMAQWWSYRHMLVDGHGNFGSMDGDGAAAQRYTEARMSKIALELLRDINKNTVNFQDNYDGSEREPVVLPARFPNLLVNGATGIAVGMATNIPPHNLAESIDAVKMVMEHPDCTTRELMEVIPGPDFPTGALVMGRSGIHRAYDTGKGSIVLRSRTEIETTQTGRERIVVTEFPYGVNKTKVHEHIVRLAQEKRLEGITAVRDESSREGVRFVIEIRREASATVILNNLFKLTSLQTNFSFNMLAIENGVPKILSLRQIIDNYISYQKEVIIRRTRFDKDKAEARAHILEGLLIALDHLDEVIAIIRNSETDVIAQTELMSRFDLSERQSQAILDMRLRRLTGLERDKIQSEYDDLLALIADLSDILAKPERIITIIKEEMDEIKRKYANPRRTELMVGEVLSLEDEDLIEEEDVLITLSNKGYIKRLAQDEFRAQKRGGRGVQGTGVNNDDFVRELVSTSTHDTLLFFTNFGRVYRLKAYEIPEYGRTAKGLPIVNLLKLEDGETIQTIINARKEETAGKSFFFTTKQGIVKRTEVSEFNNIRQNGLRALKLKEGDQLINVLLTSGQDDIIIGTHSGYSVRFNEASIRNMGRSATGVRGVKLREDDRVVGASRIRDNQEVLVITENGFGKRTSATDYPTKGRGGKGIKTANITPKNGQLAGLVTVDGTEDIMVITNKGVIIRTNVANISQTGRATLGVKIMKLDADAKIVTFTLVQPEDSSIAEINTDRENSISKNKDN</sequence>
<feature type="chain" id="PRO_0000145267" description="DNA gyrase subunit A">
    <location>
        <begin position="1"/>
        <end position="828"/>
    </location>
</feature>
<feature type="domain" description="Topo IIA-type catalytic" evidence="2">
    <location>
        <begin position="32"/>
        <end position="497"/>
    </location>
</feature>
<feature type="short sequence motif" description="GyrA-box" evidence="1">
    <location>
        <begin position="524"/>
        <end position="530"/>
    </location>
</feature>
<feature type="active site" description="O-(5'-phospho-DNA)-tyrosine intermediate" evidence="1">
    <location>
        <position position="120"/>
    </location>
</feature>
<reference key="1">
    <citation type="journal article" date="2002" name="Proc. Natl. Acad. Sci. U.S.A.">
        <title>Genome sequence and comparative microarray analysis of serotype M18 group A Streptococcus strains associated with acute rheumatic fever outbreaks.</title>
        <authorList>
            <person name="Smoot J.C."/>
            <person name="Barbian K.D."/>
            <person name="Van Gompel J.J."/>
            <person name="Smoot L.M."/>
            <person name="Chaussee M.S."/>
            <person name="Sylva G.L."/>
            <person name="Sturdevant D.E."/>
            <person name="Ricklefs S.M."/>
            <person name="Porcella S.F."/>
            <person name="Parkins L.D."/>
            <person name="Beres S.B."/>
            <person name="Campbell D.S."/>
            <person name="Smith T.M."/>
            <person name="Zhang Q."/>
            <person name="Kapur V."/>
            <person name="Daly J.A."/>
            <person name="Veasy L.G."/>
            <person name="Musser J.M."/>
        </authorList>
    </citation>
    <scope>NUCLEOTIDE SEQUENCE [LARGE SCALE GENOMIC DNA]</scope>
    <source>
        <strain>MGAS8232</strain>
    </source>
</reference>